<gene>
    <name type="primary">act3</name>
    <name type="synonym">act3-1</name>
    <name type="ORF">DDB_G0289487</name>
</gene>
<keyword id="KW-0067">ATP-binding</keyword>
<keyword id="KW-0963">Cytoplasm</keyword>
<keyword id="KW-0206">Cytoskeleton</keyword>
<keyword id="KW-0378">Hydrolase</keyword>
<keyword id="KW-0547">Nucleotide-binding</keyword>
<keyword id="KW-1185">Reference proteome</keyword>
<reference key="1">
    <citation type="journal article" date="1985" name="J. Mol. Biol.">
        <title>Organization of the actin multigene family of Dictyostelium discoideum and analysis of variability in the protein coding regions.</title>
        <authorList>
            <person name="Romans P."/>
            <person name="Firtel R.A."/>
        </authorList>
    </citation>
    <scope>NUCLEOTIDE SEQUENCE [GENOMIC DNA]</scope>
</reference>
<reference key="2">
    <citation type="journal article" date="2005" name="Nature">
        <title>The genome of the social amoeba Dictyostelium discoideum.</title>
        <authorList>
            <person name="Eichinger L."/>
            <person name="Pachebat J.A."/>
            <person name="Gloeckner G."/>
            <person name="Rajandream M.A."/>
            <person name="Sucgang R."/>
            <person name="Berriman M."/>
            <person name="Song J."/>
            <person name="Olsen R."/>
            <person name="Szafranski K."/>
            <person name="Xu Q."/>
            <person name="Tunggal B."/>
            <person name="Kummerfeld S."/>
            <person name="Madera M."/>
            <person name="Konfortov B.A."/>
            <person name="Rivero F."/>
            <person name="Bankier A.T."/>
            <person name="Lehmann R."/>
            <person name="Hamlin N."/>
            <person name="Davies R."/>
            <person name="Gaudet P."/>
            <person name="Fey P."/>
            <person name="Pilcher K."/>
            <person name="Chen G."/>
            <person name="Saunders D."/>
            <person name="Sodergren E.J."/>
            <person name="Davis P."/>
            <person name="Kerhornou A."/>
            <person name="Nie X."/>
            <person name="Hall N."/>
            <person name="Anjard C."/>
            <person name="Hemphill L."/>
            <person name="Bason N."/>
            <person name="Farbrother P."/>
            <person name="Desany B."/>
            <person name="Just E."/>
            <person name="Morio T."/>
            <person name="Rost R."/>
            <person name="Churcher C.M."/>
            <person name="Cooper J."/>
            <person name="Haydock S."/>
            <person name="van Driessche N."/>
            <person name="Cronin A."/>
            <person name="Goodhead I."/>
            <person name="Muzny D.M."/>
            <person name="Mourier T."/>
            <person name="Pain A."/>
            <person name="Lu M."/>
            <person name="Harper D."/>
            <person name="Lindsay R."/>
            <person name="Hauser H."/>
            <person name="James K.D."/>
            <person name="Quiles M."/>
            <person name="Madan Babu M."/>
            <person name="Saito T."/>
            <person name="Buchrieser C."/>
            <person name="Wardroper A."/>
            <person name="Felder M."/>
            <person name="Thangavelu M."/>
            <person name="Johnson D."/>
            <person name="Knights A."/>
            <person name="Loulseged H."/>
            <person name="Mungall K.L."/>
            <person name="Oliver K."/>
            <person name="Price C."/>
            <person name="Quail M.A."/>
            <person name="Urushihara H."/>
            <person name="Hernandez J."/>
            <person name="Rabbinowitsch E."/>
            <person name="Steffen D."/>
            <person name="Sanders M."/>
            <person name="Ma J."/>
            <person name="Kohara Y."/>
            <person name="Sharp S."/>
            <person name="Simmonds M.N."/>
            <person name="Spiegler S."/>
            <person name="Tivey A."/>
            <person name="Sugano S."/>
            <person name="White B."/>
            <person name="Walker D."/>
            <person name="Woodward J.R."/>
            <person name="Winckler T."/>
            <person name="Tanaka Y."/>
            <person name="Shaulsky G."/>
            <person name="Schleicher M."/>
            <person name="Weinstock G.M."/>
            <person name="Rosenthal A."/>
            <person name="Cox E.C."/>
            <person name="Chisholm R.L."/>
            <person name="Gibbs R.A."/>
            <person name="Loomis W.F."/>
            <person name="Platzer M."/>
            <person name="Kay R.R."/>
            <person name="Williams J.G."/>
            <person name="Dear P.H."/>
            <person name="Noegel A.A."/>
            <person name="Barrell B.G."/>
            <person name="Kuspa A."/>
        </authorList>
    </citation>
    <scope>NUCLEOTIDE SEQUENCE [LARGE SCALE GENOMIC DNA]</scope>
    <source>
        <strain>AX4</strain>
    </source>
</reference>
<reference key="3">
    <citation type="journal article" date="1979" name="Proc. Natl. Acad. Sci. U.S.A.">
        <title>Unusual nucleotide sequences at the 5' end of actin genes in Dictyostelium discoideum.</title>
        <authorList>
            <person name="Firtel R.A."/>
            <person name="Timm R."/>
            <person name="Kimmel A.R."/>
            <person name="McKeown M."/>
        </authorList>
    </citation>
    <scope>NUCLEOTIDE SEQUENCE [GENOMIC DNA] OF 1-51</scope>
</reference>
<dbReference type="EC" id="3.6.4.-" evidence="2"/>
<dbReference type="EMBL" id="X03283">
    <property type="protein sequence ID" value="CAA27033.1"/>
    <property type="molecule type" value="Genomic_DNA"/>
</dbReference>
<dbReference type="EMBL" id="AAFI02000141">
    <property type="protein sequence ID" value="EAL62675.1"/>
    <property type="molecule type" value="Genomic_DNA"/>
</dbReference>
<dbReference type="EMBL" id="V00182">
    <property type="protein sequence ID" value="CAA23478.1"/>
    <property type="molecule type" value="Genomic_DNA"/>
</dbReference>
<dbReference type="PIR" id="C23412">
    <property type="entry name" value="C23412"/>
</dbReference>
<dbReference type="RefSeq" id="XP_636192.1">
    <property type="nucleotide sequence ID" value="XM_631100.1"/>
</dbReference>
<dbReference type="SMR" id="P07829"/>
<dbReference type="FunCoup" id="P07829">
    <property type="interactions" value="350"/>
</dbReference>
<dbReference type="STRING" id="44689.P07829"/>
<dbReference type="PaxDb" id="44689-DDB0220458"/>
<dbReference type="EnsemblProtists" id="EAL62675">
    <property type="protein sequence ID" value="EAL62675"/>
    <property type="gene ID" value="DDB_G0289487"/>
</dbReference>
<dbReference type="GeneID" id="8627179"/>
<dbReference type="KEGG" id="ddi:DDB_G0289487"/>
<dbReference type="dictyBase" id="DDB_G0289487">
    <property type="gene designation" value="act3"/>
</dbReference>
<dbReference type="VEuPathDB" id="AmoebaDB:DDB_G0289487"/>
<dbReference type="eggNOG" id="KOG0676">
    <property type="taxonomic scope" value="Eukaryota"/>
</dbReference>
<dbReference type="HOGENOM" id="CLU_027965_0_2_1"/>
<dbReference type="InParanoid" id="P07829"/>
<dbReference type="OMA" id="AGIHETM"/>
<dbReference type="PhylomeDB" id="P07829"/>
<dbReference type="PRO" id="PR:P07829"/>
<dbReference type="Proteomes" id="UP000002195">
    <property type="component" value="Chromosome 5"/>
</dbReference>
<dbReference type="GO" id="GO:0015629">
    <property type="term" value="C:actin cytoskeleton"/>
    <property type="evidence" value="ECO:0000250"/>
    <property type="project" value="dictyBase"/>
</dbReference>
<dbReference type="GO" id="GO:0005938">
    <property type="term" value="C:cell cortex"/>
    <property type="evidence" value="ECO:0000314"/>
    <property type="project" value="dictyBase"/>
</dbReference>
<dbReference type="GO" id="GO:0031252">
    <property type="term" value="C:cell leading edge"/>
    <property type="evidence" value="ECO:0000314"/>
    <property type="project" value="dictyBase"/>
</dbReference>
<dbReference type="GO" id="GO:0060187">
    <property type="term" value="C:cell pole"/>
    <property type="evidence" value="ECO:0000314"/>
    <property type="project" value="dictyBase"/>
</dbReference>
<dbReference type="GO" id="GO:0005911">
    <property type="term" value="C:cell-cell junction"/>
    <property type="evidence" value="ECO:0000314"/>
    <property type="project" value="dictyBase"/>
</dbReference>
<dbReference type="GO" id="GO:0030864">
    <property type="term" value="C:cortical actin cytoskeleton"/>
    <property type="evidence" value="ECO:0000314"/>
    <property type="project" value="dictyBase"/>
</dbReference>
<dbReference type="GO" id="GO:0032009">
    <property type="term" value="C:early phagosome"/>
    <property type="evidence" value="ECO:0000314"/>
    <property type="project" value="dictyBase"/>
</dbReference>
<dbReference type="GO" id="GO:0061836">
    <property type="term" value="C:intranuclear rod"/>
    <property type="evidence" value="ECO:0000314"/>
    <property type="project" value="dictyBase"/>
</dbReference>
<dbReference type="GO" id="GO:0030027">
    <property type="term" value="C:lamellipodium"/>
    <property type="evidence" value="ECO:0000314"/>
    <property type="project" value="dictyBase"/>
</dbReference>
<dbReference type="GO" id="GO:0001891">
    <property type="term" value="C:phagocytic cup"/>
    <property type="evidence" value="ECO:0000314"/>
    <property type="project" value="dictyBase"/>
</dbReference>
<dbReference type="GO" id="GO:0045335">
    <property type="term" value="C:phagocytic vesicle"/>
    <property type="evidence" value="ECO:0000314"/>
    <property type="project" value="dictyBase"/>
</dbReference>
<dbReference type="GO" id="GO:0032010">
    <property type="term" value="C:phagolysosome"/>
    <property type="evidence" value="ECO:0000314"/>
    <property type="project" value="dictyBase"/>
</dbReference>
<dbReference type="GO" id="GO:0005524">
    <property type="term" value="F:ATP binding"/>
    <property type="evidence" value="ECO:0007669"/>
    <property type="project" value="UniProtKB-KW"/>
</dbReference>
<dbReference type="GO" id="GO:0016787">
    <property type="term" value="F:hydrolase activity"/>
    <property type="evidence" value="ECO:0007669"/>
    <property type="project" value="UniProtKB-KW"/>
</dbReference>
<dbReference type="GO" id="GO:0017022">
    <property type="term" value="F:myosin binding"/>
    <property type="evidence" value="ECO:0000250"/>
    <property type="project" value="dictyBase"/>
</dbReference>
<dbReference type="GO" id="GO:0005200">
    <property type="term" value="F:structural constituent of cytoskeleton"/>
    <property type="evidence" value="ECO:0000250"/>
    <property type="project" value="dictyBase"/>
</dbReference>
<dbReference type="GO" id="GO:0000902">
    <property type="term" value="P:cell morphogenesis"/>
    <property type="evidence" value="ECO:0000304"/>
    <property type="project" value="dictyBase"/>
</dbReference>
<dbReference type="GO" id="GO:0006909">
    <property type="term" value="P:phagocytosis"/>
    <property type="evidence" value="ECO:0000270"/>
    <property type="project" value="dictyBase"/>
</dbReference>
<dbReference type="GO" id="GO:0001778">
    <property type="term" value="P:plasma membrane repair"/>
    <property type="evidence" value="ECO:0000314"/>
    <property type="project" value="dictyBase"/>
</dbReference>
<dbReference type="GO" id="GO:0051591">
    <property type="term" value="P:response to cAMP"/>
    <property type="evidence" value="ECO:0000314"/>
    <property type="project" value="dictyBase"/>
</dbReference>
<dbReference type="CDD" id="cd10224">
    <property type="entry name" value="ASKHA_NBD_actin"/>
    <property type="match status" value="1"/>
</dbReference>
<dbReference type="FunFam" id="2.30.36.70:FF:000001">
    <property type="entry name" value="Actin, alpha skeletal muscle"/>
    <property type="match status" value="1"/>
</dbReference>
<dbReference type="FunFam" id="3.30.420.40:FF:000131">
    <property type="entry name" value="Actin, alpha skeletal muscle"/>
    <property type="match status" value="1"/>
</dbReference>
<dbReference type="FunFam" id="3.30.420.40:FF:000291">
    <property type="entry name" value="Actin, alpha skeletal muscle"/>
    <property type="match status" value="1"/>
</dbReference>
<dbReference type="FunFam" id="3.90.640.10:FF:000047">
    <property type="entry name" value="Actin, alpha skeletal muscle"/>
    <property type="match status" value="1"/>
</dbReference>
<dbReference type="FunFam" id="3.30.420.40:FF:000058">
    <property type="entry name" value="Putative actin-related protein 5"/>
    <property type="match status" value="1"/>
</dbReference>
<dbReference type="Gene3D" id="3.30.420.40">
    <property type="match status" value="2"/>
</dbReference>
<dbReference type="Gene3D" id="3.90.640.10">
    <property type="entry name" value="Actin, Chain A, domain 4"/>
    <property type="match status" value="1"/>
</dbReference>
<dbReference type="InterPro" id="IPR004000">
    <property type="entry name" value="Actin"/>
</dbReference>
<dbReference type="InterPro" id="IPR020902">
    <property type="entry name" value="Actin/actin-like_CS"/>
</dbReference>
<dbReference type="InterPro" id="IPR004001">
    <property type="entry name" value="Actin_CS"/>
</dbReference>
<dbReference type="InterPro" id="IPR043129">
    <property type="entry name" value="ATPase_NBD"/>
</dbReference>
<dbReference type="PANTHER" id="PTHR11937">
    <property type="entry name" value="ACTIN"/>
    <property type="match status" value="1"/>
</dbReference>
<dbReference type="Pfam" id="PF00022">
    <property type="entry name" value="Actin"/>
    <property type="match status" value="1"/>
</dbReference>
<dbReference type="PRINTS" id="PR00190">
    <property type="entry name" value="ACTIN"/>
</dbReference>
<dbReference type="SMART" id="SM00268">
    <property type="entry name" value="ACTIN"/>
    <property type="match status" value="1"/>
</dbReference>
<dbReference type="SUPFAM" id="SSF53067">
    <property type="entry name" value="Actin-like ATPase domain"/>
    <property type="match status" value="2"/>
</dbReference>
<dbReference type="PROSITE" id="PS00406">
    <property type="entry name" value="ACTINS_1"/>
    <property type="match status" value="1"/>
</dbReference>
<dbReference type="PROSITE" id="PS00432">
    <property type="entry name" value="ACTINS_2"/>
    <property type="match status" value="1"/>
</dbReference>
<dbReference type="PROSITE" id="PS01132">
    <property type="entry name" value="ACTINS_ACT_LIKE"/>
    <property type="match status" value="1"/>
</dbReference>
<comment type="function">
    <text>Actins are highly conserved proteins that are involved in various types of cell motility and are ubiquitously expressed in all eukaryotic cells. Multiple isoforms are involved in various cellular functions such as cytoskeleton structure, cell mobility, chromosome movement and muscle contraction.</text>
</comment>
<comment type="catalytic activity">
    <reaction evidence="2">
        <text>ATP + H2O = ADP + phosphate + H(+)</text>
        <dbReference type="Rhea" id="RHEA:13065"/>
        <dbReference type="ChEBI" id="CHEBI:15377"/>
        <dbReference type="ChEBI" id="CHEBI:15378"/>
        <dbReference type="ChEBI" id="CHEBI:30616"/>
        <dbReference type="ChEBI" id="CHEBI:43474"/>
        <dbReference type="ChEBI" id="CHEBI:456216"/>
    </reaction>
</comment>
<comment type="subcellular location">
    <subcellularLocation>
        <location>Cytoplasm</location>
        <location>Cytoskeleton</location>
    </subcellularLocation>
</comment>
<comment type="similarity">
    <text evidence="3">Belongs to the actin family.</text>
</comment>
<organism>
    <name type="scientific">Dictyostelium discoideum</name>
    <name type="common">Social amoeba</name>
    <dbReference type="NCBI Taxonomy" id="44689"/>
    <lineage>
        <taxon>Eukaryota</taxon>
        <taxon>Amoebozoa</taxon>
        <taxon>Evosea</taxon>
        <taxon>Eumycetozoa</taxon>
        <taxon>Dictyostelia</taxon>
        <taxon>Dictyosteliales</taxon>
        <taxon>Dictyosteliaceae</taxon>
        <taxon>Dictyostelium</taxon>
    </lineage>
</organism>
<name>ACT3_DICDI</name>
<evidence type="ECO:0000250" key="1"/>
<evidence type="ECO:0000250" key="2">
    <source>
        <dbReference type="UniProtKB" id="P68137"/>
    </source>
</evidence>
<evidence type="ECO:0000305" key="3"/>
<accession>P07829</accession>
<accession>Q54HE6</accession>
<feature type="initiator methionine" description="Removed" evidence="1">
    <location>
        <position position="1"/>
    </location>
</feature>
<feature type="chain" id="PRO_0000088924" description="Actin-3">
    <location>
        <begin position="2"/>
        <end position="376"/>
    </location>
</feature>
<feature type="sequence conflict" description="In Ref. 3; CAA23478." evidence="3" ref="3">
    <original>V</original>
    <variation>L</variation>
    <location>
        <position position="31"/>
    </location>
</feature>
<feature type="sequence conflict" description="In Ref. 1; CAA27033." evidence="3" ref="1">
    <original>A</original>
    <variation>R</variation>
    <location>
        <position position="115"/>
    </location>
</feature>
<feature type="sequence conflict" description="In Ref. 1; CAA27033." evidence="3" ref="1">
    <original>P</original>
    <variation>S</variation>
    <location>
        <position position="351"/>
    </location>
</feature>
<protein>
    <recommendedName>
        <fullName>Actin-3</fullName>
        <ecNumber evidence="2">3.6.4.-</ecNumber>
    </recommendedName>
    <alternativeName>
        <fullName>Actin-3-sub 1</fullName>
    </alternativeName>
</protein>
<sequence>MESEDVQALVIDNGSGMCKAGFAGDDAPRAVFPSIVGRPRYTGVMVGMGQKDSYIGDEAQSRKGILTLKYPIEHGIVTNWDDMEKIWHHTFYNELRVAPEEHPVLLTEAPLNPKANREKMTQIMFETFNTPAMYVAIQAVLSLYASGRTTGIVMDSGDGVSHTVPIYEGYSLPHAILRLDLAGRDLTDYMMKILTERGYSFTTTAEREIVRDIKEKLAYVALDFEAELQTAASSSALEKSYELPDGQVITIGNERFRCPEALFQPSFLGMESAGIHETTYNSIMKCDVDIRKDLYSNVVLSGGSTMFPGIADRMNKELTALAPSTMKIKIIAPPERKYSVWIGGSILASLPTFQQMWISKEEYDESGPSIVHRKCF</sequence>
<proteinExistence type="inferred from homology"/>